<name>Y1945_RHIE6</name>
<sequence>MDISRTEQRILHLMAQGGRIEISRDDDRKIENVSCFTRDGWLYPGVDLDLFRRLKRLKAIKSSGGQPYRITERGLTLVRSQLDNR</sequence>
<evidence type="ECO:0000255" key="1">
    <source>
        <dbReference type="HAMAP-Rule" id="MF_00827"/>
    </source>
</evidence>
<organism>
    <name type="scientific">Rhizobium etli (strain CIAT 652)</name>
    <dbReference type="NCBI Taxonomy" id="491916"/>
    <lineage>
        <taxon>Bacteria</taxon>
        <taxon>Pseudomonadati</taxon>
        <taxon>Pseudomonadota</taxon>
        <taxon>Alphaproteobacteria</taxon>
        <taxon>Hyphomicrobiales</taxon>
        <taxon>Rhizobiaceae</taxon>
        <taxon>Rhizobium/Agrobacterium group</taxon>
        <taxon>Rhizobium</taxon>
    </lineage>
</organism>
<gene>
    <name type="ordered locus">RHECIAT_CH0001945</name>
</gene>
<dbReference type="EMBL" id="CP001074">
    <property type="protein sequence ID" value="ACE90911.1"/>
    <property type="molecule type" value="Genomic_DNA"/>
</dbReference>
<dbReference type="KEGG" id="rec:RHECIAT_CH0001945"/>
<dbReference type="eggNOG" id="COG3811">
    <property type="taxonomic scope" value="Bacteria"/>
</dbReference>
<dbReference type="HOGENOM" id="CLU_164736_0_0_5"/>
<dbReference type="Proteomes" id="UP000008817">
    <property type="component" value="Chromosome"/>
</dbReference>
<dbReference type="HAMAP" id="MF_00827">
    <property type="entry name" value="UPF0386"/>
    <property type="match status" value="1"/>
</dbReference>
<dbReference type="InterPro" id="IPR018654">
    <property type="entry name" value="YjhX_toxin"/>
</dbReference>
<dbReference type="NCBIfam" id="NF010240">
    <property type="entry name" value="PRK13687.1"/>
    <property type="match status" value="1"/>
</dbReference>
<dbReference type="Pfam" id="PF09857">
    <property type="entry name" value="YjhX_toxin"/>
    <property type="match status" value="1"/>
</dbReference>
<feature type="chain" id="PRO_0000352172" description="UPF0386 protein RHECIAT_CH0001945">
    <location>
        <begin position="1"/>
        <end position="85"/>
    </location>
</feature>
<proteinExistence type="inferred from homology"/>
<accession>B3PXX5</accession>
<reference key="1">
    <citation type="journal article" date="2010" name="Appl. Environ. Microbiol.">
        <title>Conserved symbiotic plasmid DNA sequences in the multireplicon pangenomic structure of Rhizobium etli.</title>
        <authorList>
            <person name="Gonzalez V."/>
            <person name="Acosta J.L."/>
            <person name="Santamaria R.I."/>
            <person name="Bustos P."/>
            <person name="Fernandez J.L."/>
            <person name="Hernandez Gonzalez I.L."/>
            <person name="Diaz R."/>
            <person name="Flores M."/>
            <person name="Palacios R."/>
            <person name="Mora J."/>
            <person name="Davila G."/>
        </authorList>
    </citation>
    <scope>NUCLEOTIDE SEQUENCE [LARGE SCALE GENOMIC DNA]</scope>
    <source>
        <strain>CIAT 652</strain>
    </source>
</reference>
<protein>
    <recommendedName>
        <fullName evidence="1">UPF0386 protein RHECIAT_CH0001945</fullName>
    </recommendedName>
</protein>
<comment type="similarity">
    <text evidence="1">Belongs to the UPF0386 family.</text>
</comment>